<feature type="chain" id="PRO_0000322422" description="Chorismate synthase">
    <location>
        <begin position="1"/>
        <end position="404"/>
    </location>
</feature>
<feature type="region of interest" description="Disordered" evidence="2">
    <location>
        <begin position="283"/>
        <end position="320"/>
    </location>
</feature>
<feature type="region of interest" description="Disordered" evidence="2">
    <location>
        <begin position="337"/>
        <end position="357"/>
    </location>
</feature>
<feature type="binding site" evidence="1">
    <location>
        <position position="40"/>
    </location>
    <ligand>
        <name>NADP(+)</name>
        <dbReference type="ChEBI" id="CHEBI:58349"/>
    </ligand>
</feature>
<feature type="binding site" evidence="1">
    <location>
        <position position="46"/>
    </location>
    <ligand>
        <name>NADP(+)</name>
        <dbReference type="ChEBI" id="CHEBI:58349"/>
    </ligand>
</feature>
<feature type="binding site" evidence="1">
    <location>
        <begin position="133"/>
        <end position="135"/>
    </location>
    <ligand>
        <name>FMN</name>
        <dbReference type="ChEBI" id="CHEBI:58210"/>
    </ligand>
</feature>
<feature type="binding site" evidence="1">
    <location>
        <begin position="266"/>
        <end position="267"/>
    </location>
    <ligand>
        <name>FMN</name>
        <dbReference type="ChEBI" id="CHEBI:58210"/>
    </ligand>
</feature>
<feature type="binding site" evidence="1">
    <location>
        <position position="313"/>
    </location>
    <ligand>
        <name>FMN</name>
        <dbReference type="ChEBI" id="CHEBI:58210"/>
    </ligand>
</feature>
<feature type="binding site" evidence="1">
    <location>
        <begin position="328"/>
        <end position="332"/>
    </location>
    <ligand>
        <name>FMN</name>
        <dbReference type="ChEBI" id="CHEBI:58210"/>
    </ligand>
</feature>
<feature type="binding site" evidence="1">
    <location>
        <position position="354"/>
    </location>
    <ligand>
        <name>FMN</name>
        <dbReference type="ChEBI" id="CHEBI:58210"/>
    </ligand>
</feature>
<gene>
    <name evidence="1" type="primary">aroC</name>
    <name type="ordered locus">SRU_2063</name>
</gene>
<sequence length="404" mass="43986">MLRYLTAGESHGEAIIGVLEGAPAQLPLTPDDINEHLARRWLGYGRGGRSKIENDTVHIYSGVRFGKTLGSPISFRIDNGAYEKDKAGWPEKMAIEGEPPEDMEKVTMPRPGHADLAGKQKYEHDDMRPVIDRSSARETAMRVACCSVARRLLNEFGIEVGSHVVRIGDVGFDEPEEWADRRNALIEEGGGASALYETADESATRMIDDGMTERCVEHIDQTKKDRDSLGGVYEVVVTGVPPGLGSYVHWDRRLDGQLVQAICSIQAQKAAEVGDGFFNAHRPGSQVHDPIEPREDGAQAYPRRTNHAGGTEGGTTTGMPLVVRGYMKPIPTLIKPLDSVDTATGEPEPTRYERSDITSVPAASTVAEATVAYTVANAFLRKYGGDSVPAIRRHVEADRAAPNE</sequence>
<keyword id="KW-0028">Amino-acid biosynthesis</keyword>
<keyword id="KW-0057">Aromatic amino acid biosynthesis</keyword>
<keyword id="KW-0274">FAD</keyword>
<keyword id="KW-0285">Flavoprotein</keyword>
<keyword id="KW-0288">FMN</keyword>
<keyword id="KW-0456">Lyase</keyword>
<keyword id="KW-0521">NADP</keyword>
<keyword id="KW-1185">Reference proteome</keyword>
<name>AROC_SALRD</name>
<reference key="1">
    <citation type="journal article" date="2005" name="Proc. Natl. Acad. Sci. U.S.A.">
        <title>The genome of Salinibacter ruber: convergence and gene exchange among hyperhalophilic bacteria and archaea.</title>
        <authorList>
            <person name="Mongodin E.F."/>
            <person name="Nelson K.E."/>
            <person name="Daugherty S."/>
            <person name="DeBoy R.T."/>
            <person name="Wister J."/>
            <person name="Khouri H."/>
            <person name="Weidman J."/>
            <person name="Walsh D.A."/>
            <person name="Papke R.T."/>
            <person name="Sanchez Perez G."/>
            <person name="Sharma A.K."/>
            <person name="Nesbo C.L."/>
            <person name="MacLeod D."/>
            <person name="Bapteste E."/>
            <person name="Doolittle W.F."/>
            <person name="Charlebois R.L."/>
            <person name="Legault B."/>
            <person name="Rodriguez-Valera F."/>
        </authorList>
    </citation>
    <scope>NUCLEOTIDE SEQUENCE [LARGE SCALE GENOMIC DNA]</scope>
    <source>
        <strain>DSM 13855 / CECT 5946 / M31</strain>
    </source>
</reference>
<evidence type="ECO:0000255" key="1">
    <source>
        <dbReference type="HAMAP-Rule" id="MF_00300"/>
    </source>
</evidence>
<evidence type="ECO:0000256" key="2">
    <source>
        <dbReference type="SAM" id="MobiDB-lite"/>
    </source>
</evidence>
<comment type="function">
    <text evidence="1">Catalyzes the anti-1,4-elimination of the C-3 phosphate and the C-6 proR hydrogen from 5-enolpyruvylshikimate-3-phosphate (EPSP) to yield chorismate, which is the branch point compound that serves as the starting substrate for the three terminal pathways of aromatic amino acid biosynthesis. This reaction introduces a second double bond into the aromatic ring system.</text>
</comment>
<comment type="catalytic activity">
    <reaction evidence="1">
        <text>5-O-(1-carboxyvinyl)-3-phosphoshikimate = chorismate + phosphate</text>
        <dbReference type="Rhea" id="RHEA:21020"/>
        <dbReference type="ChEBI" id="CHEBI:29748"/>
        <dbReference type="ChEBI" id="CHEBI:43474"/>
        <dbReference type="ChEBI" id="CHEBI:57701"/>
        <dbReference type="EC" id="4.2.3.5"/>
    </reaction>
</comment>
<comment type="cofactor">
    <cofactor evidence="1">
        <name>FMNH2</name>
        <dbReference type="ChEBI" id="CHEBI:57618"/>
    </cofactor>
    <text evidence="1">Reduced FMN (FMNH(2)).</text>
</comment>
<comment type="pathway">
    <text evidence="1">Metabolic intermediate biosynthesis; chorismate biosynthesis; chorismate from D-erythrose 4-phosphate and phosphoenolpyruvate: step 7/7.</text>
</comment>
<comment type="subunit">
    <text evidence="1">Homotetramer.</text>
</comment>
<comment type="similarity">
    <text evidence="1">Belongs to the chorismate synthase family.</text>
</comment>
<dbReference type="EC" id="4.2.3.5" evidence="1"/>
<dbReference type="EMBL" id="CP000159">
    <property type="protein sequence ID" value="ABC46295.1"/>
    <property type="molecule type" value="Genomic_DNA"/>
</dbReference>
<dbReference type="RefSeq" id="WP_011404791.1">
    <property type="nucleotide sequence ID" value="NC_007677.1"/>
</dbReference>
<dbReference type="RefSeq" id="YP_446169.1">
    <property type="nucleotide sequence ID" value="NC_007677.1"/>
</dbReference>
<dbReference type="SMR" id="Q2S0W2"/>
<dbReference type="STRING" id="309807.SRU_2063"/>
<dbReference type="EnsemblBacteria" id="ABC46295">
    <property type="protein sequence ID" value="ABC46295"/>
    <property type="gene ID" value="SRU_2063"/>
</dbReference>
<dbReference type="GeneID" id="83729006"/>
<dbReference type="KEGG" id="sru:SRU_2063"/>
<dbReference type="PATRIC" id="fig|309807.25.peg.2145"/>
<dbReference type="eggNOG" id="COG0082">
    <property type="taxonomic scope" value="Bacteria"/>
</dbReference>
<dbReference type="HOGENOM" id="CLU_034547_2_0_10"/>
<dbReference type="OrthoDB" id="9771806at2"/>
<dbReference type="UniPathway" id="UPA00053">
    <property type="reaction ID" value="UER00090"/>
</dbReference>
<dbReference type="Proteomes" id="UP000008674">
    <property type="component" value="Chromosome"/>
</dbReference>
<dbReference type="GO" id="GO:0005829">
    <property type="term" value="C:cytosol"/>
    <property type="evidence" value="ECO:0007669"/>
    <property type="project" value="TreeGrafter"/>
</dbReference>
<dbReference type="GO" id="GO:0004107">
    <property type="term" value="F:chorismate synthase activity"/>
    <property type="evidence" value="ECO:0007669"/>
    <property type="project" value="UniProtKB-UniRule"/>
</dbReference>
<dbReference type="GO" id="GO:0010181">
    <property type="term" value="F:FMN binding"/>
    <property type="evidence" value="ECO:0007669"/>
    <property type="project" value="TreeGrafter"/>
</dbReference>
<dbReference type="GO" id="GO:0008652">
    <property type="term" value="P:amino acid biosynthetic process"/>
    <property type="evidence" value="ECO:0007669"/>
    <property type="project" value="UniProtKB-KW"/>
</dbReference>
<dbReference type="GO" id="GO:0009073">
    <property type="term" value="P:aromatic amino acid family biosynthetic process"/>
    <property type="evidence" value="ECO:0007669"/>
    <property type="project" value="UniProtKB-KW"/>
</dbReference>
<dbReference type="GO" id="GO:0009423">
    <property type="term" value="P:chorismate biosynthetic process"/>
    <property type="evidence" value="ECO:0007669"/>
    <property type="project" value="UniProtKB-UniRule"/>
</dbReference>
<dbReference type="CDD" id="cd07304">
    <property type="entry name" value="Chorismate_synthase"/>
    <property type="match status" value="1"/>
</dbReference>
<dbReference type="FunFam" id="3.60.150.10:FF:000002">
    <property type="entry name" value="Chorismate synthase"/>
    <property type="match status" value="1"/>
</dbReference>
<dbReference type="Gene3D" id="3.60.150.10">
    <property type="entry name" value="Chorismate synthase AroC"/>
    <property type="match status" value="1"/>
</dbReference>
<dbReference type="HAMAP" id="MF_00300">
    <property type="entry name" value="Chorismate_synth"/>
    <property type="match status" value="1"/>
</dbReference>
<dbReference type="InterPro" id="IPR000453">
    <property type="entry name" value="Chorismate_synth"/>
</dbReference>
<dbReference type="InterPro" id="IPR035904">
    <property type="entry name" value="Chorismate_synth_AroC_sf"/>
</dbReference>
<dbReference type="InterPro" id="IPR020541">
    <property type="entry name" value="Chorismate_synthase_CS"/>
</dbReference>
<dbReference type="NCBIfam" id="TIGR00033">
    <property type="entry name" value="aroC"/>
    <property type="match status" value="1"/>
</dbReference>
<dbReference type="NCBIfam" id="NF003793">
    <property type="entry name" value="PRK05382.1"/>
    <property type="match status" value="1"/>
</dbReference>
<dbReference type="PANTHER" id="PTHR21085">
    <property type="entry name" value="CHORISMATE SYNTHASE"/>
    <property type="match status" value="1"/>
</dbReference>
<dbReference type="PANTHER" id="PTHR21085:SF0">
    <property type="entry name" value="CHORISMATE SYNTHASE"/>
    <property type="match status" value="1"/>
</dbReference>
<dbReference type="Pfam" id="PF01264">
    <property type="entry name" value="Chorismate_synt"/>
    <property type="match status" value="1"/>
</dbReference>
<dbReference type="PIRSF" id="PIRSF001456">
    <property type="entry name" value="Chorismate_synth"/>
    <property type="match status" value="1"/>
</dbReference>
<dbReference type="SUPFAM" id="SSF103263">
    <property type="entry name" value="Chorismate synthase, AroC"/>
    <property type="match status" value="1"/>
</dbReference>
<dbReference type="PROSITE" id="PS00787">
    <property type="entry name" value="CHORISMATE_SYNTHASE_1"/>
    <property type="match status" value="1"/>
</dbReference>
<accession>Q2S0W2</accession>
<proteinExistence type="inferred from homology"/>
<organism>
    <name type="scientific">Salinibacter ruber (strain DSM 13855 / M31)</name>
    <dbReference type="NCBI Taxonomy" id="309807"/>
    <lineage>
        <taxon>Bacteria</taxon>
        <taxon>Pseudomonadati</taxon>
        <taxon>Rhodothermota</taxon>
        <taxon>Rhodothermia</taxon>
        <taxon>Rhodothermales</taxon>
        <taxon>Salinibacteraceae</taxon>
        <taxon>Salinibacter</taxon>
    </lineage>
</organism>
<protein>
    <recommendedName>
        <fullName evidence="1">Chorismate synthase</fullName>
        <shortName evidence="1">CS</shortName>
        <ecNumber evidence="1">4.2.3.5</ecNumber>
    </recommendedName>
    <alternativeName>
        <fullName evidence="1">5-enolpyruvylshikimate-3-phosphate phospholyase</fullName>
    </alternativeName>
</protein>